<dbReference type="EMBL" id="HE601013">
    <property type="protein sequence ID" value="CAP37279.1"/>
    <property type="molecule type" value="Genomic_DNA"/>
</dbReference>
<dbReference type="SMR" id="A8XXB0"/>
<dbReference type="FunCoup" id="A8XXB0">
    <property type="interactions" value="745"/>
</dbReference>
<dbReference type="STRING" id="6238.A8XXB0"/>
<dbReference type="EnsemblMetazoa" id="CBG20153.1">
    <property type="protein sequence ID" value="CBG20153.1"/>
    <property type="gene ID" value="WBGene00039208"/>
</dbReference>
<dbReference type="KEGG" id="cbr:CBG_20153"/>
<dbReference type="CTD" id="8584524"/>
<dbReference type="WormBase" id="CBG20153">
    <property type="protein sequence ID" value="CBP19810"/>
    <property type="gene ID" value="WBGene00039208"/>
    <property type="gene designation" value="Cbr-ccdc-55"/>
</dbReference>
<dbReference type="eggNOG" id="KOG2117">
    <property type="taxonomic scope" value="Eukaryota"/>
</dbReference>
<dbReference type="HOGENOM" id="CLU_772145_0_0_1"/>
<dbReference type="InParanoid" id="A8XXB0"/>
<dbReference type="OMA" id="MSKPLAF"/>
<dbReference type="Proteomes" id="UP000008549">
    <property type="component" value="Unassembled WGS sequence"/>
</dbReference>
<dbReference type="GO" id="GO:0000381">
    <property type="term" value="P:regulation of alternative mRNA splicing, via spliceosome"/>
    <property type="evidence" value="ECO:0007669"/>
    <property type="project" value="InterPro"/>
</dbReference>
<dbReference type="InterPro" id="IPR042816">
    <property type="entry name" value="Nsrp1"/>
</dbReference>
<dbReference type="InterPro" id="IPR018612">
    <property type="entry name" value="NSRP1_N"/>
</dbReference>
<dbReference type="PANTHER" id="PTHR31938">
    <property type="entry name" value="NUCLEAR SPECKLE SPLICING REGULATORY PROTEIN 1"/>
    <property type="match status" value="1"/>
</dbReference>
<dbReference type="PANTHER" id="PTHR31938:SF4">
    <property type="entry name" value="NUCLEAR SPECKLE SPLICING REGULATORY PROTEIN 1"/>
    <property type="match status" value="1"/>
</dbReference>
<dbReference type="Pfam" id="PF09745">
    <property type="entry name" value="NSRP1_N"/>
    <property type="match status" value="1"/>
</dbReference>
<comment type="similarity">
    <text evidence="3">Belongs to the NSRP1 family.</text>
</comment>
<organism>
    <name type="scientific">Caenorhabditis briggsae</name>
    <dbReference type="NCBI Taxonomy" id="6238"/>
    <lineage>
        <taxon>Eukaryota</taxon>
        <taxon>Metazoa</taxon>
        <taxon>Ecdysozoa</taxon>
        <taxon>Nematoda</taxon>
        <taxon>Chromadorea</taxon>
        <taxon>Rhabditida</taxon>
        <taxon>Rhabditina</taxon>
        <taxon>Rhabditomorpha</taxon>
        <taxon>Rhabditoidea</taxon>
        <taxon>Rhabditidae</taxon>
        <taxon>Peloderinae</taxon>
        <taxon>Caenorhabditis</taxon>
    </lineage>
</organism>
<sequence length="393" mass="45338">MSAPPKRFGLIVKQKEEPKRAPVRVSSVFGDDDDDEAPATATNTSSASVIRIQKAAEREHQKAEAEDPTIFDYDGNYDEIQAIKNEKKEEARKADKNKESKYAEAIIKAHARRQLEQFSREERQQIKEREKEAGEFDDKEVFVTGAYRKQQEEVKKYREQEAEEAAFNDMTSVQKQKMWEMGMGRTLLNDLARDPTAIKQRKMEKKNVRKREDSGDEEEQKEDVKKKEEPKKKSIYDTDSEDDEKKSKAPEAPKKNFEGELKAGLNLVTKKATTHAERIRQRNFTPTPPSSDDEAPKPAPRAVGDHRRSTSPRRSRDHAQRNQREKTKSKSPEPPKAQKTSLKDKLKPKRIDKAARLDGLKAILAQRNTEKDIEEARQRYFERREQGLVVPPL</sequence>
<evidence type="ECO:0000255" key="1"/>
<evidence type="ECO:0000256" key="2">
    <source>
        <dbReference type="SAM" id="MobiDB-lite"/>
    </source>
</evidence>
<evidence type="ECO:0000305" key="3"/>
<evidence type="ECO:0000312" key="4">
    <source>
        <dbReference type="EMBL" id="CAP37279.1"/>
    </source>
</evidence>
<protein>
    <recommendedName>
        <fullName>Nuclear speckle splicing regulatory protein 1 homolog</fullName>
    </recommendedName>
    <alternativeName>
        <fullName>Coiled-coil domain-containing protein 55 homolog</fullName>
    </alternativeName>
</protein>
<accession>A8XXB0</accession>
<name>NSRP1_CAEBR</name>
<keyword id="KW-0175">Coiled coil</keyword>
<keyword id="KW-1185">Reference proteome</keyword>
<reference evidence="4" key="1">
    <citation type="journal article" date="2003" name="PLoS Biol.">
        <title>The genome sequence of Caenorhabditis briggsae: a platform for comparative genomics.</title>
        <authorList>
            <person name="Stein L.D."/>
            <person name="Bao Z."/>
            <person name="Blasiar D."/>
            <person name="Blumenthal T."/>
            <person name="Brent M.R."/>
            <person name="Chen N."/>
            <person name="Chinwalla A."/>
            <person name="Clarke L."/>
            <person name="Clee C."/>
            <person name="Coghlan A."/>
            <person name="Coulson A."/>
            <person name="D'Eustachio P."/>
            <person name="Fitch D.H.A."/>
            <person name="Fulton L.A."/>
            <person name="Fulton R.E."/>
            <person name="Griffiths-Jones S."/>
            <person name="Harris T.W."/>
            <person name="Hillier L.W."/>
            <person name="Kamath R."/>
            <person name="Kuwabara P.E."/>
            <person name="Mardis E.R."/>
            <person name="Marra M.A."/>
            <person name="Miner T.L."/>
            <person name="Minx P."/>
            <person name="Mullikin J.C."/>
            <person name="Plumb R.W."/>
            <person name="Rogers J."/>
            <person name="Schein J.E."/>
            <person name="Sohrmann M."/>
            <person name="Spieth J."/>
            <person name="Stajich J.E."/>
            <person name="Wei C."/>
            <person name="Willey D."/>
            <person name="Wilson R.K."/>
            <person name="Durbin R.M."/>
            <person name="Waterston R.H."/>
        </authorList>
    </citation>
    <scope>NUCLEOTIDE SEQUENCE [LARGE SCALE GENOMIC DNA]</scope>
    <source>
        <strain evidence="4">AF16</strain>
    </source>
</reference>
<feature type="chain" id="PRO_0000355615" description="Nuclear speckle splicing regulatory protein 1 homolog">
    <location>
        <begin position="1"/>
        <end position="393"/>
    </location>
</feature>
<feature type="region of interest" description="Disordered" evidence="2">
    <location>
        <begin position="1"/>
        <end position="49"/>
    </location>
</feature>
<feature type="region of interest" description="Disordered" evidence="2">
    <location>
        <begin position="187"/>
        <end position="350"/>
    </location>
</feature>
<feature type="coiled-coil region" evidence="1">
    <location>
        <begin position="76"/>
        <end position="166"/>
    </location>
</feature>
<feature type="compositionally biased region" description="Low complexity" evidence="2">
    <location>
        <begin position="39"/>
        <end position="48"/>
    </location>
</feature>
<feature type="compositionally biased region" description="Basic residues" evidence="2">
    <location>
        <begin position="199"/>
        <end position="209"/>
    </location>
</feature>
<feature type="compositionally biased region" description="Basic and acidic residues" evidence="2">
    <location>
        <begin position="222"/>
        <end position="236"/>
    </location>
</feature>
<feature type="compositionally biased region" description="Basic and acidic residues" evidence="2">
    <location>
        <begin position="243"/>
        <end position="261"/>
    </location>
</feature>
<feature type="compositionally biased region" description="Basic and acidic residues" evidence="2">
    <location>
        <begin position="317"/>
        <end position="333"/>
    </location>
</feature>
<feature type="compositionally biased region" description="Basic and acidic residues" evidence="2">
    <location>
        <begin position="341"/>
        <end position="350"/>
    </location>
</feature>
<proteinExistence type="inferred from homology"/>
<gene>
    <name evidence="4" type="primary">ccdc-55</name>
    <name type="ORF">CBG20153</name>
</gene>